<keyword id="KW-0997">Cell inner membrane</keyword>
<keyword id="KW-1003">Cell membrane</keyword>
<keyword id="KW-0472">Membrane</keyword>
<keyword id="KW-0653">Protein transport</keyword>
<keyword id="KW-0811">Translocation</keyword>
<keyword id="KW-0812">Transmembrane</keyword>
<keyword id="KW-1133">Transmembrane helix</keyword>
<keyword id="KW-0813">Transport</keyword>
<comment type="function">
    <text evidence="1">Part of the twin-arginine translocation (Tat) system that transports large folded proteins containing a characteristic twin-arginine motif in their signal peptide across membranes. Together with TatC, TatB is part of a receptor directly interacting with Tat signal peptides. TatB may form an oligomeric binding site that transiently accommodates folded Tat precursor proteins before their translocation.</text>
</comment>
<comment type="subunit">
    <text evidence="1">The Tat system comprises two distinct complexes: a TatABC complex, containing multiple copies of TatA, TatB and TatC subunits, and a separate TatA complex, containing only TatA subunits. Substrates initially bind to the TatABC complex, which probably triggers association of the separate TatA complex to form the active translocon.</text>
</comment>
<comment type="subcellular location">
    <subcellularLocation>
        <location evidence="1">Cell inner membrane</location>
        <topology evidence="1">Single-pass membrane protein</topology>
    </subcellularLocation>
</comment>
<comment type="similarity">
    <text evidence="1">Belongs to the TatB family.</text>
</comment>
<name>TATB_SALTI</name>
<evidence type="ECO:0000255" key="1">
    <source>
        <dbReference type="HAMAP-Rule" id="MF_00237"/>
    </source>
</evidence>
<evidence type="ECO:0000256" key="2">
    <source>
        <dbReference type="SAM" id="MobiDB-lite"/>
    </source>
</evidence>
<gene>
    <name evidence="1" type="primary">tatB</name>
    <name type="ordered locus">STY3585</name>
    <name type="ordered locus">t3323</name>
</gene>
<proteinExistence type="inferred from homology"/>
<feature type="chain" id="PRO_0000192668" description="Sec-independent protein translocase protein TatB">
    <location>
        <begin position="1"/>
        <end position="182"/>
    </location>
</feature>
<feature type="transmembrane region" description="Helical" evidence="1">
    <location>
        <begin position="1"/>
        <end position="21"/>
    </location>
</feature>
<feature type="region of interest" description="Disordered" evidence="2">
    <location>
        <begin position="88"/>
        <end position="107"/>
    </location>
</feature>
<feature type="region of interest" description="Disordered" evidence="2">
    <location>
        <begin position="121"/>
        <end position="182"/>
    </location>
</feature>
<feature type="compositionally biased region" description="Low complexity" evidence="2">
    <location>
        <begin position="168"/>
        <end position="182"/>
    </location>
</feature>
<sequence length="182" mass="19571">MFDIGFSELLLVFVIGLIVLGPQRLPVAVKTVAGWIRALRSLATTVQNELTQELKLQEFQDSLKKVEKASLENLTPELKASMDELRQAAESMKRTYSANDPEQASDEAHTIHNPVVKGNETQHEGVTPAAAETQASAPEQKPEPVKANVPESTETASVAAIDAEKKSAAPVVESSPSSSDKP</sequence>
<reference key="1">
    <citation type="journal article" date="2001" name="Nature">
        <title>Complete genome sequence of a multiple drug resistant Salmonella enterica serovar Typhi CT18.</title>
        <authorList>
            <person name="Parkhill J."/>
            <person name="Dougan G."/>
            <person name="James K.D."/>
            <person name="Thomson N.R."/>
            <person name="Pickard D."/>
            <person name="Wain J."/>
            <person name="Churcher C.M."/>
            <person name="Mungall K.L."/>
            <person name="Bentley S.D."/>
            <person name="Holden M.T.G."/>
            <person name="Sebaihia M."/>
            <person name="Baker S."/>
            <person name="Basham D."/>
            <person name="Brooks K."/>
            <person name="Chillingworth T."/>
            <person name="Connerton P."/>
            <person name="Cronin A."/>
            <person name="Davis P."/>
            <person name="Davies R.M."/>
            <person name="Dowd L."/>
            <person name="White N."/>
            <person name="Farrar J."/>
            <person name="Feltwell T."/>
            <person name="Hamlin N."/>
            <person name="Haque A."/>
            <person name="Hien T.T."/>
            <person name="Holroyd S."/>
            <person name="Jagels K."/>
            <person name="Krogh A."/>
            <person name="Larsen T.S."/>
            <person name="Leather S."/>
            <person name="Moule S."/>
            <person name="O'Gaora P."/>
            <person name="Parry C."/>
            <person name="Quail M.A."/>
            <person name="Rutherford K.M."/>
            <person name="Simmonds M."/>
            <person name="Skelton J."/>
            <person name="Stevens K."/>
            <person name="Whitehead S."/>
            <person name="Barrell B.G."/>
        </authorList>
    </citation>
    <scope>NUCLEOTIDE SEQUENCE [LARGE SCALE GENOMIC DNA]</scope>
    <source>
        <strain>CT18</strain>
    </source>
</reference>
<reference key="2">
    <citation type="journal article" date="2003" name="J. Bacteriol.">
        <title>Comparative genomics of Salmonella enterica serovar Typhi strains Ty2 and CT18.</title>
        <authorList>
            <person name="Deng W."/>
            <person name="Liou S.-R."/>
            <person name="Plunkett G. III"/>
            <person name="Mayhew G.F."/>
            <person name="Rose D.J."/>
            <person name="Burland V."/>
            <person name="Kodoyianni V."/>
            <person name="Schwartz D.C."/>
            <person name="Blattner F.R."/>
        </authorList>
    </citation>
    <scope>NUCLEOTIDE SEQUENCE [LARGE SCALE GENOMIC DNA]</scope>
    <source>
        <strain>ATCC 700931 / Ty2</strain>
    </source>
</reference>
<dbReference type="EMBL" id="AL513382">
    <property type="protein sequence ID" value="CAD07918.1"/>
    <property type="molecule type" value="Genomic_DNA"/>
</dbReference>
<dbReference type="EMBL" id="AE014613">
    <property type="protein sequence ID" value="AAO70851.1"/>
    <property type="molecule type" value="Genomic_DNA"/>
</dbReference>
<dbReference type="RefSeq" id="NP_457777.1">
    <property type="nucleotide sequence ID" value="NC_003198.1"/>
</dbReference>
<dbReference type="RefSeq" id="WP_000459611.1">
    <property type="nucleotide sequence ID" value="NZ_WSUR01000033.1"/>
</dbReference>
<dbReference type="SMR" id="Q8Z3C0"/>
<dbReference type="STRING" id="220341.gene:17587437"/>
<dbReference type="KEGG" id="stt:t3323"/>
<dbReference type="KEGG" id="sty:STY3585"/>
<dbReference type="PATRIC" id="fig|220341.7.peg.3652"/>
<dbReference type="eggNOG" id="COG1826">
    <property type="taxonomic scope" value="Bacteria"/>
</dbReference>
<dbReference type="HOGENOM" id="CLU_086034_1_0_6"/>
<dbReference type="OMA" id="ADQPRTH"/>
<dbReference type="OrthoDB" id="9816005at2"/>
<dbReference type="Proteomes" id="UP000000541">
    <property type="component" value="Chromosome"/>
</dbReference>
<dbReference type="Proteomes" id="UP000002670">
    <property type="component" value="Chromosome"/>
</dbReference>
<dbReference type="GO" id="GO:0033281">
    <property type="term" value="C:TAT protein transport complex"/>
    <property type="evidence" value="ECO:0007669"/>
    <property type="project" value="UniProtKB-UniRule"/>
</dbReference>
<dbReference type="GO" id="GO:0008320">
    <property type="term" value="F:protein transmembrane transporter activity"/>
    <property type="evidence" value="ECO:0007669"/>
    <property type="project" value="UniProtKB-UniRule"/>
</dbReference>
<dbReference type="GO" id="GO:0043953">
    <property type="term" value="P:protein transport by the Tat complex"/>
    <property type="evidence" value="ECO:0007669"/>
    <property type="project" value="UniProtKB-UniRule"/>
</dbReference>
<dbReference type="FunFam" id="1.20.5.3310:FF:000002">
    <property type="entry name" value="Sec-independent protein translocase protein TatB"/>
    <property type="match status" value="1"/>
</dbReference>
<dbReference type="Gene3D" id="1.20.5.3310">
    <property type="match status" value="1"/>
</dbReference>
<dbReference type="HAMAP" id="MF_00237">
    <property type="entry name" value="TatB"/>
    <property type="match status" value="1"/>
</dbReference>
<dbReference type="InterPro" id="IPR018448">
    <property type="entry name" value="TatB"/>
</dbReference>
<dbReference type="NCBIfam" id="TIGR01410">
    <property type="entry name" value="tatB"/>
    <property type="match status" value="1"/>
</dbReference>
<dbReference type="PANTHER" id="PTHR33162">
    <property type="entry name" value="SEC-INDEPENDENT PROTEIN TRANSLOCASE PROTEIN TATA, CHLOROPLASTIC"/>
    <property type="match status" value="1"/>
</dbReference>
<dbReference type="PANTHER" id="PTHR33162:SF1">
    <property type="entry name" value="SEC-INDEPENDENT PROTEIN TRANSLOCASE PROTEIN TATA, CHLOROPLASTIC"/>
    <property type="match status" value="1"/>
</dbReference>
<dbReference type="PRINTS" id="PR01506">
    <property type="entry name" value="TATBPROTEIN"/>
</dbReference>
<accession>Q8Z3C0</accession>
<protein>
    <recommendedName>
        <fullName evidence="1">Sec-independent protein translocase protein TatB</fullName>
    </recommendedName>
</protein>
<organism>
    <name type="scientific">Salmonella typhi</name>
    <dbReference type="NCBI Taxonomy" id="90370"/>
    <lineage>
        <taxon>Bacteria</taxon>
        <taxon>Pseudomonadati</taxon>
        <taxon>Pseudomonadota</taxon>
        <taxon>Gammaproteobacteria</taxon>
        <taxon>Enterobacterales</taxon>
        <taxon>Enterobacteriaceae</taxon>
        <taxon>Salmonella</taxon>
    </lineage>
</organism>